<comment type="function">
    <text evidence="1">This protein binds specifically to 23S rRNA; its binding is stimulated by other ribosomal proteins, e.g. L4, L17, and L20. It is important during the early stages of 50S assembly. It makes multiple contacts with different domains of the 23S rRNA in the assembled 50S subunit and ribosome (By similarity).</text>
</comment>
<comment type="function">
    <text evidence="1">The globular domain of the protein is located near the polypeptide exit tunnel on the outside of the subunit, while an extended beta-hairpin is found that lines the wall of the exit tunnel in the center of the 70S ribosome.</text>
</comment>
<comment type="subunit">
    <text evidence="1">Part of the 50S ribosomal subunit.</text>
</comment>
<comment type="similarity">
    <text evidence="1">Belongs to the universal ribosomal protein uL22 family.</text>
</comment>
<organism>
    <name type="scientific">Paraburkholderia xenovorans (strain LB400)</name>
    <dbReference type="NCBI Taxonomy" id="266265"/>
    <lineage>
        <taxon>Bacteria</taxon>
        <taxon>Pseudomonadati</taxon>
        <taxon>Pseudomonadota</taxon>
        <taxon>Betaproteobacteria</taxon>
        <taxon>Burkholderiales</taxon>
        <taxon>Burkholderiaceae</taxon>
        <taxon>Paraburkholderia</taxon>
    </lineage>
</organism>
<feature type="chain" id="PRO_1000052552" description="Large ribosomal subunit protein uL22">
    <location>
        <begin position="1"/>
        <end position="109"/>
    </location>
</feature>
<name>RL22_PARXL</name>
<sequence length="109" mass="11803">MEVKAIHRGARISAQKTRLVADQIRGLPVDKALNVLTFSPKKAAGIVKKVVLSAIANAEHNEGADIDELKITSIYIDKAASLKRFTARAKGRGNRIEKQSCHITVTVGN</sequence>
<dbReference type="EMBL" id="CP000270">
    <property type="protein sequence ID" value="ABE32614.1"/>
    <property type="molecule type" value="Genomic_DNA"/>
</dbReference>
<dbReference type="SMR" id="Q13TH5"/>
<dbReference type="STRING" id="266265.Bxe_A0319"/>
<dbReference type="KEGG" id="bxb:DR64_2489"/>
<dbReference type="KEGG" id="bxe:Bxe_A0319"/>
<dbReference type="eggNOG" id="COG0091">
    <property type="taxonomic scope" value="Bacteria"/>
</dbReference>
<dbReference type="OrthoDB" id="9805969at2"/>
<dbReference type="Proteomes" id="UP000001817">
    <property type="component" value="Chromosome 1"/>
</dbReference>
<dbReference type="GO" id="GO:0022625">
    <property type="term" value="C:cytosolic large ribosomal subunit"/>
    <property type="evidence" value="ECO:0007669"/>
    <property type="project" value="TreeGrafter"/>
</dbReference>
<dbReference type="GO" id="GO:0019843">
    <property type="term" value="F:rRNA binding"/>
    <property type="evidence" value="ECO:0007669"/>
    <property type="project" value="UniProtKB-UniRule"/>
</dbReference>
<dbReference type="GO" id="GO:0003735">
    <property type="term" value="F:structural constituent of ribosome"/>
    <property type="evidence" value="ECO:0007669"/>
    <property type="project" value="InterPro"/>
</dbReference>
<dbReference type="GO" id="GO:0006412">
    <property type="term" value="P:translation"/>
    <property type="evidence" value="ECO:0007669"/>
    <property type="project" value="UniProtKB-UniRule"/>
</dbReference>
<dbReference type="CDD" id="cd00336">
    <property type="entry name" value="Ribosomal_L22"/>
    <property type="match status" value="1"/>
</dbReference>
<dbReference type="FunFam" id="3.90.470.10:FF:000001">
    <property type="entry name" value="50S ribosomal protein L22"/>
    <property type="match status" value="1"/>
</dbReference>
<dbReference type="Gene3D" id="3.90.470.10">
    <property type="entry name" value="Ribosomal protein L22/L17"/>
    <property type="match status" value="1"/>
</dbReference>
<dbReference type="HAMAP" id="MF_01331_B">
    <property type="entry name" value="Ribosomal_uL22_B"/>
    <property type="match status" value="1"/>
</dbReference>
<dbReference type="InterPro" id="IPR001063">
    <property type="entry name" value="Ribosomal_uL22"/>
</dbReference>
<dbReference type="InterPro" id="IPR005727">
    <property type="entry name" value="Ribosomal_uL22_bac/chlpt-type"/>
</dbReference>
<dbReference type="InterPro" id="IPR047867">
    <property type="entry name" value="Ribosomal_uL22_bac/org-type"/>
</dbReference>
<dbReference type="InterPro" id="IPR018260">
    <property type="entry name" value="Ribosomal_uL22_CS"/>
</dbReference>
<dbReference type="InterPro" id="IPR036394">
    <property type="entry name" value="Ribosomal_uL22_sf"/>
</dbReference>
<dbReference type="NCBIfam" id="TIGR01044">
    <property type="entry name" value="rplV_bact"/>
    <property type="match status" value="1"/>
</dbReference>
<dbReference type="PANTHER" id="PTHR13501">
    <property type="entry name" value="CHLOROPLAST 50S RIBOSOMAL PROTEIN L22-RELATED"/>
    <property type="match status" value="1"/>
</dbReference>
<dbReference type="PANTHER" id="PTHR13501:SF8">
    <property type="entry name" value="LARGE RIBOSOMAL SUBUNIT PROTEIN UL22M"/>
    <property type="match status" value="1"/>
</dbReference>
<dbReference type="Pfam" id="PF00237">
    <property type="entry name" value="Ribosomal_L22"/>
    <property type="match status" value="1"/>
</dbReference>
<dbReference type="SUPFAM" id="SSF54843">
    <property type="entry name" value="Ribosomal protein L22"/>
    <property type="match status" value="1"/>
</dbReference>
<dbReference type="PROSITE" id="PS00464">
    <property type="entry name" value="RIBOSOMAL_L22"/>
    <property type="match status" value="1"/>
</dbReference>
<accession>Q13TH5</accession>
<protein>
    <recommendedName>
        <fullName evidence="1">Large ribosomal subunit protein uL22</fullName>
    </recommendedName>
    <alternativeName>
        <fullName evidence="2">50S ribosomal protein L22</fullName>
    </alternativeName>
</protein>
<reference key="1">
    <citation type="journal article" date="2006" name="Proc. Natl. Acad. Sci. U.S.A.">
        <title>Burkholderia xenovorans LB400 harbors a multi-replicon, 9.73-Mbp genome shaped for versatility.</title>
        <authorList>
            <person name="Chain P.S.G."/>
            <person name="Denef V.J."/>
            <person name="Konstantinidis K.T."/>
            <person name="Vergez L.M."/>
            <person name="Agullo L."/>
            <person name="Reyes V.L."/>
            <person name="Hauser L."/>
            <person name="Cordova M."/>
            <person name="Gomez L."/>
            <person name="Gonzalez M."/>
            <person name="Land M."/>
            <person name="Lao V."/>
            <person name="Larimer F."/>
            <person name="LiPuma J.J."/>
            <person name="Mahenthiralingam E."/>
            <person name="Malfatti S.A."/>
            <person name="Marx C.J."/>
            <person name="Parnell J.J."/>
            <person name="Ramette A."/>
            <person name="Richardson P."/>
            <person name="Seeger M."/>
            <person name="Smith D."/>
            <person name="Spilker T."/>
            <person name="Sul W.J."/>
            <person name="Tsoi T.V."/>
            <person name="Ulrich L.E."/>
            <person name="Zhulin I.B."/>
            <person name="Tiedje J.M."/>
        </authorList>
    </citation>
    <scope>NUCLEOTIDE SEQUENCE [LARGE SCALE GENOMIC DNA]</scope>
    <source>
        <strain>LB400</strain>
    </source>
</reference>
<proteinExistence type="inferred from homology"/>
<evidence type="ECO:0000255" key="1">
    <source>
        <dbReference type="HAMAP-Rule" id="MF_01331"/>
    </source>
</evidence>
<evidence type="ECO:0000305" key="2"/>
<keyword id="KW-1185">Reference proteome</keyword>
<keyword id="KW-0687">Ribonucleoprotein</keyword>
<keyword id="KW-0689">Ribosomal protein</keyword>
<keyword id="KW-0694">RNA-binding</keyword>
<keyword id="KW-0699">rRNA-binding</keyword>
<gene>
    <name evidence="1" type="primary">rplV</name>
    <name type="ordered locus">Bxeno_A4076</name>
    <name type="ORF">Bxe_A0319</name>
</gene>